<sequence>MAREFSLEKTRNIGIMAHIDAGKTTTTERILFYTGRIHKIGETHEGASQMDWMEQEQERGITITSAATTAQWKGYRVNIIDTPGHVDFTVEVERSLRVLDGAVAVLDAQSGVEPQTETVWRQATTYGVPRIVFVNKMDKIGADFLYSVGTLRDRLQANAHAIQLPIGAEDNFEGIIDLVENVAYFYEDDLGTRSDAKEIPEEYKEQAEELRNSLIEAVCELDEELMDKYLEGEEITIDELKAGIRKGTLNVEFYPVLVGSAFKNKGVQLVLDAVLDYLPAPTDVAAIKGTRPDTNEEIERHSSDEEPFSALAFKVMTDPYVGKLTFFRVYSGTLDSGSYVKNSTKGKRERVGRILQMHANSREEISTVYAGDIAAAVGLKDTTTGDTLCDEKDLVILESMEFPEPVIDVAIEPKSKADQDKMGIALAKLAEEDPTFRTQTNPETGQTIISGMGELHLDIIVDRMKREFKVEANVGAPQVAYRETFRTGAKVEGKFVRQSGGRGQFGHVWIEFEPNEEGAGFEFENAIVGGVVPREYIPAVQAGLEDALENGVLAGFPLIDIKAKLFDGSYHDVDSNEMAFKVAASMALKNAVSKCNPVLLEPIMKVEVVIPEEYMGDIMGDITSRRGRVEGMEARGNAQVVRAMVPLAEMFGYATALRSNTQGRGTFTMHMDHYEEVPKSVAEEIIKKNKGE</sequence>
<gene>
    <name type="primary">fusA</name>
    <name type="synonym">fus</name>
    <name type="ordered locus">BSU01120</name>
</gene>
<keyword id="KW-0002">3D-structure</keyword>
<keyword id="KW-0963">Cytoplasm</keyword>
<keyword id="KW-0903">Direct protein sequencing</keyword>
<keyword id="KW-0251">Elongation factor</keyword>
<keyword id="KW-0342">GTP-binding</keyword>
<keyword id="KW-0547">Nucleotide-binding</keyword>
<keyword id="KW-0597">Phosphoprotein</keyword>
<keyword id="KW-0648">Protein biosynthesis</keyword>
<keyword id="KW-1185">Reference proteome</keyword>
<proteinExistence type="evidence at protein level"/>
<name>EFG_BACSU</name>
<organism>
    <name type="scientific">Bacillus subtilis (strain 168)</name>
    <dbReference type="NCBI Taxonomy" id="224308"/>
    <lineage>
        <taxon>Bacteria</taxon>
        <taxon>Bacillati</taxon>
        <taxon>Bacillota</taxon>
        <taxon>Bacilli</taxon>
        <taxon>Bacillales</taxon>
        <taxon>Bacillaceae</taxon>
        <taxon>Bacillus</taxon>
    </lineage>
</organism>
<protein>
    <recommendedName>
        <fullName>Elongation factor G</fullName>
        <shortName>EF-G</shortName>
    </recommendedName>
    <alternativeName>
        <fullName>Vegetative protein 19</fullName>
        <shortName>VEG19</shortName>
    </alternativeName>
</protein>
<accession>P80868</accession>
<accession>P70980</accession>
<comment type="function">
    <text evidence="1">Catalyzes the GTP-dependent ribosomal translocation step during translation elongation. During this step, the ribosome changes from the pre-translocational (PRE) to the post-translocational (POST) state as the newly formed A-site-bound peptidyl-tRNA and P-site-bound deacylated tRNA move to the P and E sites, respectively. Catalyzes the coordinated movement of the two tRNA molecules, the mRNA and conformational changes in the ribosome (By similarity).</text>
</comment>
<comment type="subcellular location">
    <subcellularLocation>
        <location evidence="1">Cytoplasm</location>
    </subcellularLocation>
</comment>
<comment type="PTM">
    <text evidence="2 3">Phosphorylated on threonine residue(s). Phosphorylated by PrkC and dephosphorylated by PrpC, in vitro.</text>
</comment>
<comment type="similarity">
    <text evidence="5">Belongs to the TRAFAC class translation factor GTPase superfamily. Classic translation factor GTPase family. EF-G/EF-2 subfamily.</text>
</comment>
<feature type="initiator methionine" description="Removed" evidence="4">
    <location>
        <position position="1"/>
    </location>
</feature>
<feature type="chain" id="PRO_0000091071" description="Elongation factor G">
    <location>
        <begin position="2"/>
        <end position="692"/>
    </location>
</feature>
<feature type="domain" description="tr-type G">
    <location>
        <begin position="8"/>
        <end position="282"/>
    </location>
</feature>
<feature type="binding site" evidence="1">
    <location>
        <begin position="17"/>
        <end position="24"/>
    </location>
    <ligand>
        <name>GTP</name>
        <dbReference type="ChEBI" id="CHEBI:37565"/>
    </ligand>
</feature>
<feature type="binding site" evidence="1">
    <location>
        <begin position="81"/>
        <end position="85"/>
    </location>
    <ligand>
        <name>GTP</name>
        <dbReference type="ChEBI" id="CHEBI:37565"/>
    </ligand>
</feature>
<feature type="binding site" evidence="1">
    <location>
        <begin position="135"/>
        <end position="138"/>
    </location>
    <ligand>
        <name>GTP</name>
        <dbReference type="ChEBI" id="CHEBI:37565"/>
    </ligand>
</feature>
<feature type="modified residue" description="Phosphoserine" evidence="3">
    <location>
        <position position="213"/>
    </location>
</feature>
<feature type="modified residue" description="Phosphoserine" evidence="3">
    <location>
        <position position="302"/>
    </location>
</feature>
<feature type="modified residue" description="Phosphoserine" evidence="3">
    <location>
        <position position="569"/>
    </location>
</feature>
<feature type="modified residue" description="Phosphoserine" evidence="3">
    <location>
        <position position="680"/>
    </location>
</feature>
<feature type="sequence conflict" description="In Ref. 1; BAA11003." evidence="5" ref="1">
    <original>I</original>
    <variation>L</variation>
    <location>
        <position position="235"/>
    </location>
</feature>
<feature type="sequence conflict" description="In Ref. 1; BAA11003." evidence="5" ref="1">
    <original>E</original>
    <variation>G</variation>
    <location>
        <position position="675"/>
    </location>
</feature>
<feature type="strand" evidence="6">
    <location>
        <begin position="10"/>
        <end position="16"/>
    </location>
</feature>
<feature type="turn" evidence="6">
    <location>
        <begin position="19"/>
        <end position="22"/>
    </location>
</feature>
<feature type="helix" evidence="6">
    <location>
        <begin position="23"/>
        <end position="33"/>
    </location>
</feature>
<feature type="strand" evidence="6">
    <location>
        <begin position="66"/>
        <end position="72"/>
    </location>
</feature>
<feature type="strand" evidence="6">
    <location>
        <begin position="75"/>
        <end position="80"/>
    </location>
</feature>
<feature type="helix" evidence="6">
    <location>
        <begin position="90"/>
        <end position="98"/>
    </location>
</feature>
<feature type="strand" evidence="6">
    <location>
        <begin position="100"/>
        <end position="107"/>
    </location>
</feature>
<feature type="turn" evidence="6">
    <location>
        <begin position="108"/>
        <end position="110"/>
    </location>
</feature>
<feature type="helix" evidence="6">
    <location>
        <begin position="114"/>
        <end position="125"/>
    </location>
</feature>
<feature type="strand" evidence="6">
    <location>
        <begin position="130"/>
        <end position="135"/>
    </location>
</feature>
<feature type="strand" evidence="6">
    <location>
        <begin position="137"/>
        <end position="139"/>
    </location>
</feature>
<feature type="helix" evidence="6">
    <location>
        <begin position="144"/>
        <end position="153"/>
    </location>
</feature>
<feature type="strand" evidence="6">
    <location>
        <begin position="159"/>
        <end position="166"/>
    </location>
</feature>
<feature type="helix" evidence="6">
    <location>
        <begin position="169"/>
        <end position="171"/>
    </location>
</feature>
<feature type="strand" evidence="6">
    <location>
        <begin position="174"/>
        <end position="177"/>
    </location>
</feature>
<feature type="turn" evidence="6">
    <location>
        <begin position="178"/>
        <end position="181"/>
    </location>
</feature>
<feature type="strand" evidence="6">
    <location>
        <begin position="182"/>
        <end position="185"/>
    </location>
</feature>
<feature type="strand" evidence="6">
    <location>
        <begin position="188"/>
        <end position="191"/>
    </location>
</feature>
<feature type="helix" evidence="6">
    <location>
        <begin position="201"/>
        <end position="203"/>
    </location>
</feature>
<feature type="helix" evidence="6">
    <location>
        <begin position="204"/>
        <end position="219"/>
    </location>
</feature>
<feature type="helix" evidence="6">
    <location>
        <begin position="223"/>
        <end position="230"/>
    </location>
</feature>
<feature type="helix" evidence="6">
    <location>
        <begin position="237"/>
        <end position="249"/>
    </location>
</feature>
<feature type="strand" evidence="6">
    <location>
        <begin position="254"/>
        <end position="258"/>
    </location>
</feature>
<feature type="turn" evidence="6">
    <location>
        <begin position="261"/>
        <end position="264"/>
    </location>
</feature>
<feature type="helix" evidence="6">
    <location>
        <begin position="267"/>
        <end position="277"/>
    </location>
</feature>
<feature type="helix" evidence="6">
    <location>
        <begin position="281"/>
        <end position="283"/>
    </location>
</feature>
<feature type="strand" evidence="6">
    <location>
        <begin position="287"/>
        <end position="290"/>
    </location>
</feature>
<feature type="strand" evidence="6">
    <location>
        <begin position="297"/>
        <end position="300"/>
    </location>
</feature>
<feature type="strand" evidence="6">
    <location>
        <begin position="304"/>
        <end position="306"/>
    </location>
</feature>
<feature type="strand" evidence="6">
    <location>
        <begin position="309"/>
        <end position="316"/>
    </location>
</feature>
<feature type="turn" evidence="6">
    <location>
        <begin position="319"/>
        <end position="321"/>
    </location>
</feature>
<feature type="strand" evidence="6">
    <location>
        <begin position="324"/>
        <end position="332"/>
    </location>
</feature>
<feature type="strand" evidence="6">
    <location>
        <begin position="338"/>
        <end position="342"/>
    </location>
</feature>
<feature type="turn" evidence="6">
    <location>
        <begin position="343"/>
        <end position="346"/>
    </location>
</feature>
<feature type="strand" evidence="6">
    <location>
        <begin position="347"/>
        <end position="351"/>
    </location>
</feature>
<feature type="strand" evidence="6">
    <location>
        <begin position="353"/>
        <end position="357"/>
    </location>
</feature>
<feature type="strand" evidence="6">
    <location>
        <begin position="362"/>
        <end position="368"/>
    </location>
</feature>
<feature type="strand" evidence="6">
    <location>
        <begin position="373"/>
        <end position="378"/>
    </location>
</feature>
<feature type="strand" evidence="6">
    <location>
        <begin position="387"/>
        <end position="389"/>
    </location>
</feature>
<dbReference type="EMBL" id="D64127">
    <property type="protein sequence ID" value="BAA11003.1"/>
    <property type="molecule type" value="Genomic_DNA"/>
</dbReference>
<dbReference type="EMBL" id="AL009126">
    <property type="protein sequence ID" value="CAB11888.2"/>
    <property type="molecule type" value="Genomic_DNA"/>
</dbReference>
<dbReference type="PIR" id="B69628">
    <property type="entry name" value="B69628"/>
</dbReference>
<dbReference type="RefSeq" id="NP_387993.2">
    <property type="nucleotide sequence ID" value="NC_000964.3"/>
</dbReference>
<dbReference type="RefSeq" id="WP_003235056.1">
    <property type="nucleotide sequence ID" value="NZ_OZ025638.1"/>
</dbReference>
<dbReference type="PDB" id="5VH6">
    <property type="method" value="X-ray"/>
    <property type="resolution" value="2.61 A"/>
    <property type="chains" value="A=1-406"/>
</dbReference>
<dbReference type="PDBsum" id="5VH6"/>
<dbReference type="SMR" id="P80868"/>
<dbReference type="FunCoup" id="P80868">
    <property type="interactions" value="748"/>
</dbReference>
<dbReference type="IntAct" id="P80868">
    <property type="interactions" value="4"/>
</dbReference>
<dbReference type="MINT" id="P80868"/>
<dbReference type="STRING" id="224308.BSU01120"/>
<dbReference type="iPTMnet" id="P80868"/>
<dbReference type="jPOST" id="P80868"/>
<dbReference type="PaxDb" id="224308-BSU01120"/>
<dbReference type="EnsemblBacteria" id="CAB11888">
    <property type="protein sequence ID" value="CAB11888"/>
    <property type="gene ID" value="BSU_01120"/>
</dbReference>
<dbReference type="GeneID" id="936826"/>
<dbReference type="KEGG" id="bsu:BSU01120"/>
<dbReference type="PATRIC" id="fig|224308.179.peg.115"/>
<dbReference type="eggNOG" id="COG0480">
    <property type="taxonomic scope" value="Bacteria"/>
</dbReference>
<dbReference type="InParanoid" id="P80868"/>
<dbReference type="OrthoDB" id="9804431at2"/>
<dbReference type="PhylomeDB" id="P80868"/>
<dbReference type="BioCyc" id="BSUB:BSU01120-MONOMER"/>
<dbReference type="Proteomes" id="UP000001570">
    <property type="component" value="Chromosome"/>
</dbReference>
<dbReference type="GO" id="GO:0005737">
    <property type="term" value="C:cytoplasm"/>
    <property type="evidence" value="ECO:0007669"/>
    <property type="project" value="UniProtKB-SubCell"/>
</dbReference>
<dbReference type="GO" id="GO:0005525">
    <property type="term" value="F:GTP binding"/>
    <property type="evidence" value="ECO:0007669"/>
    <property type="project" value="UniProtKB-UniRule"/>
</dbReference>
<dbReference type="GO" id="GO:0003924">
    <property type="term" value="F:GTPase activity"/>
    <property type="evidence" value="ECO:0007669"/>
    <property type="project" value="InterPro"/>
</dbReference>
<dbReference type="GO" id="GO:0003746">
    <property type="term" value="F:translation elongation factor activity"/>
    <property type="evidence" value="ECO:0007669"/>
    <property type="project" value="UniProtKB-UniRule"/>
</dbReference>
<dbReference type="GO" id="GO:0032790">
    <property type="term" value="P:ribosome disassembly"/>
    <property type="evidence" value="ECO:0000318"/>
    <property type="project" value="GO_Central"/>
</dbReference>
<dbReference type="CDD" id="cd01886">
    <property type="entry name" value="EF-G"/>
    <property type="match status" value="1"/>
</dbReference>
<dbReference type="CDD" id="cd16262">
    <property type="entry name" value="EFG_III"/>
    <property type="match status" value="1"/>
</dbReference>
<dbReference type="CDD" id="cd01434">
    <property type="entry name" value="EFG_mtEFG1_IV"/>
    <property type="match status" value="1"/>
</dbReference>
<dbReference type="CDD" id="cd03713">
    <property type="entry name" value="EFG_mtEFG_C"/>
    <property type="match status" value="1"/>
</dbReference>
<dbReference type="CDD" id="cd04088">
    <property type="entry name" value="EFG_mtEFG_II"/>
    <property type="match status" value="1"/>
</dbReference>
<dbReference type="FunFam" id="2.40.30.10:FF:000006">
    <property type="entry name" value="Elongation factor G"/>
    <property type="match status" value="1"/>
</dbReference>
<dbReference type="FunFam" id="3.30.230.10:FF:000003">
    <property type="entry name" value="Elongation factor G"/>
    <property type="match status" value="1"/>
</dbReference>
<dbReference type="FunFam" id="3.30.70.240:FF:000001">
    <property type="entry name" value="Elongation factor G"/>
    <property type="match status" value="1"/>
</dbReference>
<dbReference type="FunFam" id="3.30.70.870:FF:000001">
    <property type="entry name" value="Elongation factor G"/>
    <property type="match status" value="1"/>
</dbReference>
<dbReference type="FunFam" id="3.40.50.300:FF:000029">
    <property type="entry name" value="Elongation factor G"/>
    <property type="match status" value="1"/>
</dbReference>
<dbReference type="Gene3D" id="3.30.230.10">
    <property type="match status" value="1"/>
</dbReference>
<dbReference type="Gene3D" id="3.30.70.240">
    <property type="match status" value="1"/>
</dbReference>
<dbReference type="Gene3D" id="3.30.70.870">
    <property type="entry name" value="Elongation Factor G (Translational Gtpase), domain 3"/>
    <property type="match status" value="1"/>
</dbReference>
<dbReference type="Gene3D" id="3.40.50.300">
    <property type="entry name" value="P-loop containing nucleotide triphosphate hydrolases"/>
    <property type="match status" value="1"/>
</dbReference>
<dbReference type="Gene3D" id="2.40.30.10">
    <property type="entry name" value="Translation factors"/>
    <property type="match status" value="1"/>
</dbReference>
<dbReference type="HAMAP" id="MF_00054_B">
    <property type="entry name" value="EF_G_EF_2_B"/>
    <property type="match status" value="1"/>
</dbReference>
<dbReference type="InterPro" id="IPR041095">
    <property type="entry name" value="EFG_II"/>
</dbReference>
<dbReference type="InterPro" id="IPR009022">
    <property type="entry name" value="EFG_III"/>
</dbReference>
<dbReference type="InterPro" id="IPR035647">
    <property type="entry name" value="EFG_III/V"/>
</dbReference>
<dbReference type="InterPro" id="IPR047872">
    <property type="entry name" value="EFG_IV"/>
</dbReference>
<dbReference type="InterPro" id="IPR035649">
    <property type="entry name" value="EFG_V"/>
</dbReference>
<dbReference type="InterPro" id="IPR000640">
    <property type="entry name" value="EFG_V-like"/>
</dbReference>
<dbReference type="InterPro" id="IPR004161">
    <property type="entry name" value="EFTu-like_2"/>
</dbReference>
<dbReference type="InterPro" id="IPR031157">
    <property type="entry name" value="G_TR_CS"/>
</dbReference>
<dbReference type="InterPro" id="IPR027417">
    <property type="entry name" value="P-loop_NTPase"/>
</dbReference>
<dbReference type="InterPro" id="IPR020568">
    <property type="entry name" value="Ribosomal_Su5_D2-typ_SF"/>
</dbReference>
<dbReference type="InterPro" id="IPR014721">
    <property type="entry name" value="Ribsml_uS5_D2-typ_fold_subgr"/>
</dbReference>
<dbReference type="InterPro" id="IPR005225">
    <property type="entry name" value="Small_GTP-bd"/>
</dbReference>
<dbReference type="InterPro" id="IPR000795">
    <property type="entry name" value="T_Tr_GTP-bd_dom"/>
</dbReference>
<dbReference type="InterPro" id="IPR009000">
    <property type="entry name" value="Transl_B-barrel_sf"/>
</dbReference>
<dbReference type="InterPro" id="IPR004540">
    <property type="entry name" value="Transl_elong_EFG/EF2"/>
</dbReference>
<dbReference type="InterPro" id="IPR005517">
    <property type="entry name" value="Transl_elong_EFG/EF2_IV"/>
</dbReference>
<dbReference type="NCBIfam" id="TIGR00484">
    <property type="entry name" value="EF-G"/>
    <property type="match status" value="1"/>
</dbReference>
<dbReference type="NCBIfam" id="NF009379">
    <property type="entry name" value="PRK12740.1-3"/>
    <property type="match status" value="1"/>
</dbReference>
<dbReference type="NCBIfam" id="NF009381">
    <property type="entry name" value="PRK12740.1-5"/>
    <property type="match status" value="1"/>
</dbReference>
<dbReference type="NCBIfam" id="TIGR00231">
    <property type="entry name" value="small_GTP"/>
    <property type="match status" value="1"/>
</dbReference>
<dbReference type="PANTHER" id="PTHR43261:SF1">
    <property type="entry name" value="RIBOSOME-RELEASING FACTOR 2, MITOCHONDRIAL"/>
    <property type="match status" value="1"/>
</dbReference>
<dbReference type="PANTHER" id="PTHR43261">
    <property type="entry name" value="TRANSLATION ELONGATION FACTOR G-RELATED"/>
    <property type="match status" value="1"/>
</dbReference>
<dbReference type="Pfam" id="PF00679">
    <property type="entry name" value="EFG_C"/>
    <property type="match status" value="1"/>
</dbReference>
<dbReference type="Pfam" id="PF14492">
    <property type="entry name" value="EFG_III"/>
    <property type="match status" value="1"/>
</dbReference>
<dbReference type="Pfam" id="PF03764">
    <property type="entry name" value="EFG_IV"/>
    <property type="match status" value="1"/>
</dbReference>
<dbReference type="Pfam" id="PF00009">
    <property type="entry name" value="GTP_EFTU"/>
    <property type="match status" value="1"/>
</dbReference>
<dbReference type="Pfam" id="PF03144">
    <property type="entry name" value="GTP_EFTU_D2"/>
    <property type="match status" value="1"/>
</dbReference>
<dbReference type="PRINTS" id="PR00315">
    <property type="entry name" value="ELONGATNFCT"/>
</dbReference>
<dbReference type="SMART" id="SM00838">
    <property type="entry name" value="EFG_C"/>
    <property type="match status" value="1"/>
</dbReference>
<dbReference type="SMART" id="SM00889">
    <property type="entry name" value="EFG_IV"/>
    <property type="match status" value="1"/>
</dbReference>
<dbReference type="SUPFAM" id="SSF54980">
    <property type="entry name" value="EF-G C-terminal domain-like"/>
    <property type="match status" value="2"/>
</dbReference>
<dbReference type="SUPFAM" id="SSF52540">
    <property type="entry name" value="P-loop containing nucleoside triphosphate hydrolases"/>
    <property type="match status" value="1"/>
</dbReference>
<dbReference type="SUPFAM" id="SSF54211">
    <property type="entry name" value="Ribosomal protein S5 domain 2-like"/>
    <property type="match status" value="1"/>
</dbReference>
<dbReference type="SUPFAM" id="SSF50447">
    <property type="entry name" value="Translation proteins"/>
    <property type="match status" value="1"/>
</dbReference>
<dbReference type="PROSITE" id="PS00301">
    <property type="entry name" value="G_TR_1"/>
    <property type="match status" value="1"/>
</dbReference>
<dbReference type="PROSITE" id="PS51722">
    <property type="entry name" value="G_TR_2"/>
    <property type="match status" value="1"/>
</dbReference>
<reference key="1">
    <citation type="journal article" date="1996" name="Microbiology">
        <title>Sequence analysis of a 50 kb region between spo0H and rrnH on the Bacillus subtilis chromosome.</title>
        <authorList>
            <person name="Yasumoto K."/>
            <person name="Liu H."/>
            <person name="Jeong S.M."/>
            <person name="Ohashi Y."/>
            <person name="Kakinuma S."/>
            <person name="Tanaka K."/>
            <person name="Kawamura F."/>
            <person name="Yoshikawa H."/>
            <person name="Takahashi H."/>
        </authorList>
    </citation>
    <scope>NUCLEOTIDE SEQUENCE [GENOMIC DNA]</scope>
    <source>
        <strain>168</strain>
    </source>
</reference>
<reference key="2">
    <citation type="journal article" date="1997" name="Nature">
        <title>The complete genome sequence of the Gram-positive bacterium Bacillus subtilis.</title>
        <authorList>
            <person name="Kunst F."/>
            <person name="Ogasawara N."/>
            <person name="Moszer I."/>
            <person name="Albertini A.M."/>
            <person name="Alloni G."/>
            <person name="Azevedo V."/>
            <person name="Bertero M.G."/>
            <person name="Bessieres P."/>
            <person name="Bolotin A."/>
            <person name="Borchert S."/>
            <person name="Borriss R."/>
            <person name="Boursier L."/>
            <person name="Brans A."/>
            <person name="Braun M."/>
            <person name="Brignell S.C."/>
            <person name="Bron S."/>
            <person name="Brouillet S."/>
            <person name="Bruschi C.V."/>
            <person name="Caldwell B."/>
            <person name="Capuano V."/>
            <person name="Carter N.M."/>
            <person name="Choi S.-K."/>
            <person name="Codani J.-J."/>
            <person name="Connerton I.F."/>
            <person name="Cummings N.J."/>
            <person name="Daniel R.A."/>
            <person name="Denizot F."/>
            <person name="Devine K.M."/>
            <person name="Duesterhoeft A."/>
            <person name="Ehrlich S.D."/>
            <person name="Emmerson P.T."/>
            <person name="Entian K.-D."/>
            <person name="Errington J."/>
            <person name="Fabret C."/>
            <person name="Ferrari E."/>
            <person name="Foulger D."/>
            <person name="Fritz C."/>
            <person name="Fujita M."/>
            <person name="Fujita Y."/>
            <person name="Fuma S."/>
            <person name="Galizzi A."/>
            <person name="Galleron N."/>
            <person name="Ghim S.-Y."/>
            <person name="Glaser P."/>
            <person name="Goffeau A."/>
            <person name="Golightly E.J."/>
            <person name="Grandi G."/>
            <person name="Guiseppi G."/>
            <person name="Guy B.J."/>
            <person name="Haga K."/>
            <person name="Haiech J."/>
            <person name="Harwood C.R."/>
            <person name="Henaut A."/>
            <person name="Hilbert H."/>
            <person name="Holsappel S."/>
            <person name="Hosono S."/>
            <person name="Hullo M.-F."/>
            <person name="Itaya M."/>
            <person name="Jones L.-M."/>
            <person name="Joris B."/>
            <person name="Karamata D."/>
            <person name="Kasahara Y."/>
            <person name="Klaerr-Blanchard M."/>
            <person name="Klein C."/>
            <person name="Kobayashi Y."/>
            <person name="Koetter P."/>
            <person name="Koningstein G."/>
            <person name="Krogh S."/>
            <person name="Kumano M."/>
            <person name="Kurita K."/>
            <person name="Lapidus A."/>
            <person name="Lardinois S."/>
            <person name="Lauber J."/>
            <person name="Lazarevic V."/>
            <person name="Lee S.-M."/>
            <person name="Levine A."/>
            <person name="Liu H."/>
            <person name="Masuda S."/>
            <person name="Mauel C."/>
            <person name="Medigue C."/>
            <person name="Medina N."/>
            <person name="Mellado R.P."/>
            <person name="Mizuno M."/>
            <person name="Moestl D."/>
            <person name="Nakai S."/>
            <person name="Noback M."/>
            <person name="Noone D."/>
            <person name="O'Reilly M."/>
            <person name="Ogawa K."/>
            <person name="Ogiwara A."/>
            <person name="Oudega B."/>
            <person name="Park S.-H."/>
            <person name="Parro V."/>
            <person name="Pohl T.M."/>
            <person name="Portetelle D."/>
            <person name="Porwollik S."/>
            <person name="Prescott A.M."/>
            <person name="Presecan E."/>
            <person name="Pujic P."/>
            <person name="Purnelle B."/>
            <person name="Rapoport G."/>
            <person name="Rey M."/>
            <person name="Reynolds S."/>
            <person name="Rieger M."/>
            <person name="Rivolta C."/>
            <person name="Rocha E."/>
            <person name="Roche B."/>
            <person name="Rose M."/>
            <person name="Sadaie Y."/>
            <person name="Sato T."/>
            <person name="Scanlan E."/>
            <person name="Schleich S."/>
            <person name="Schroeter R."/>
            <person name="Scoffone F."/>
            <person name="Sekiguchi J."/>
            <person name="Sekowska A."/>
            <person name="Seror S.J."/>
            <person name="Serror P."/>
            <person name="Shin B.-S."/>
            <person name="Soldo B."/>
            <person name="Sorokin A."/>
            <person name="Tacconi E."/>
            <person name="Takagi T."/>
            <person name="Takahashi H."/>
            <person name="Takemaru K."/>
            <person name="Takeuchi M."/>
            <person name="Tamakoshi A."/>
            <person name="Tanaka T."/>
            <person name="Terpstra P."/>
            <person name="Tognoni A."/>
            <person name="Tosato V."/>
            <person name="Uchiyama S."/>
            <person name="Vandenbol M."/>
            <person name="Vannier F."/>
            <person name="Vassarotti A."/>
            <person name="Viari A."/>
            <person name="Wambutt R."/>
            <person name="Wedler E."/>
            <person name="Wedler H."/>
            <person name="Weitzenegger T."/>
            <person name="Winters P."/>
            <person name="Wipat A."/>
            <person name="Yamamoto H."/>
            <person name="Yamane K."/>
            <person name="Yasumoto K."/>
            <person name="Yata K."/>
            <person name="Yoshida K."/>
            <person name="Yoshikawa H.-F."/>
            <person name="Zumstein E."/>
            <person name="Yoshikawa H."/>
            <person name="Danchin A."/>
        </authorList>
    </citation>
    <scope>NUCLEOTIDE SEQUENCE [LARGE SCALE GENOMIC DNA]</scope>
    <source>
        <strain>168</strain>
    </source>
</reference>
<reference key="3">
    <citation type="journal article" date="2009" name="Microbiology">
        <title>From a consortium sequence to a unified sequence: the Bacillus subtilis 168 reference genome a decade later.</title>
        <authorList>
            <person name="Barbe V."/>
            <person name="Cruveiller S."/>
            <person name="Kunst F."/>
            <person name="Lenoble P."/>
            <person name="Meurice G."/>
            <person name="Sekowska A."/>
            <person name="Vallenet D."/>
            <person name="Wang T."/>
            <person name="Moszer I."/>
            <person name="Medigue C."/>
            <person name="Danchin A."/>
        </authorList>
    </citation>
    <scope>SEQUENCE REVISION TO 235 AND 675</scope>
</reference>
<reference key="4">
    <citation type="journal article" date="1997" name="Electrophoresis">
        <title>First steps from a two-dimensional protein index towards a response-regulation map for Bacillus subtilis.</title>
        <authorList>
            <person name="Antelmann H."/>
            <person name="Bernhardt J."/>
            <person name="Schmid R."/>
            <person name="Mach H."/>
            <person name="Voelker U."/>
            <person name="Hecker M."/>
        </authorList>
    </citation>
    <scope>PROTEIN SEQUENCE OF 2-14</scope>
    <source>
        <strain>168 / IS58</strain>
    </source>
</reference>
<reference key="5">
    <citation type="journal article" date="2002" name="J. Bacteriol.">
        <title>The PrpC serine-threonine phosphatase and PrkC kinase have opposing physiological roles in stationary-phase Bacillus subtilis cells.</title>
        <authorList>
            <person name="Gaidenko T.A."/>
            <person name="Kim T.-J."/>
            <person name="Price C.W."/>
        </authorList>
    </citation>
    <scope>PHOSPHORYLATION</scope>
    <scope>IDENTIFICATION BY MASS SPECTROMETRY</scope>
    <source>
        <strain>168 / Marburg / ATCC 6051 / DSM 10 / JCM 1465 / NBRC 13719 / NCIMB 3610 / NRRL NRS-744 / VKM B-501</strain>
    </source>
</reference>
<reference key="6">
    <citation type="journal article" date="2007" name="Mol. Cell. Proteomics">
        <title>The serine/threonine/tyrosine phosphoproteome of the model bacterium Bacillus subtilis.</title>
        <authorList>
            <person name="Macek B."/>
            <person name="Mijakovic I."/>
            <person name="Olsen J.V."/>
            <person name="Gnad F."/>
            <person name="Kumar C."/>
            <person name="Jensen P.R."/>
            <person name="Mann M."/>
        </authorList>
    </citation>
    <scope>PHOSPHORYLATION [LARGE SCALE ANALYSIS] AT SER-213; SER-302; SER-569 AND SER-680</scope>
    <scope>IDENTIFICATION BY MASS SPECTROMETRY</scope>
    <source>
        <strain>168</strain>
    </source>
</reference>
<evidence type="ECO:0000250" key="1"/>
<evidence type="ECO:0000269" key="2">
    <source>
    </source>
</evidence>
<evidence type="ECO:0000269" key="3">
    <source>
    </source>
</evidence>
<evidence type="ECO:0000269" key="4">
    <source>
    </source>
</evidence>
<evidence type="ECO:0000305" key="5"/>
<evidence type="ECO:0007829" key="6">
    <source>
        <dbReference type="PDB" id="5VH6"/>
    </source>
</evidence>